<feature type="chain" id="PRO_0000188547" description="Glycogen phosphorylase 2">
    <location>
        <begin position="1"/>
        <end position="993"/>
    </location>
</feature>
<feature type="region of interest" description="Disordered" evidence="2">
    <location>
        <begin position="1"/>
        <end position="82"/>
    </location>
</feature>
<feature type="region of interest" description="Disordered" evidence="2">
    <location>
        <begin position="962"/>
        <end position="993"/>
    </location>
</feature>
<feature type="compositionally biased region" description="Polar residues" evidence="2">
    <location>
        <begin position="19"/>
        <end position="48"/>
    </location>
</feature>
<feature type="compositionally biased region" description="Low complexity" evidence="2">
    <location>
        <begin position="58"/>
        <end position="77"/>
    </location>
</feature>
<feature type="compositionally biased region" description="Polar residues" evidence="2">
    <location>
        <begin position="962"/>
        <end position="981"/>
    </location>
</feature>
<feature type="compositionally biased region" description="Gly residues" evidence="2">
    <location>
        <begin position="983"/>
        <end position="993"/>
    </location>
</feature>
<feature type="site" description="Involved in the association of subunits" evidence="1">
    <location>
        <position position="229"/>
    </location>
</feature>
<feature type="site" description="May be involved in allosteric control" evidence="1">
    <location>
        <position position="242"/>
    </location>
</feature>
<feature type="modified residue" description="N6-(pyridoxal phosphate)lysine" evidence="1">
    <location>
        <position position="763"/>
    </location>
</feature>
<feature type="sequence conflict" description="In Ref. 1; AAA33211." evidence="4" ref="1">
    <original>R</original>
    <variation>T</variation>
    <location>
        <position position="5"/>
    </location>
</feature>
<feature type="sequence conflict" description="In Ref. 1; AAA33211." evidence="4" ref="1">
    <original>Y</original>
    <variation>L</variation>
    <location>
        <position position="268"/>
    </location>
</feature>
<feature type="sequence conflict" description="In Ref. 1; AAA33211." evidence="4" ref="1">
    <original>V</original>
    <variation>I</variation>
    <location>
        <position position="316"/>
    </location>
</feature>
<feature type="sequence conflict" description="In Ref. 1; AAA33211." evidence="4" ref="1">
    <original>HN</original>
    <variation>T</variation>
    <location>
        <begin position="414"/>
        <end position="415"/>
    </location>
</feature>
<feature type="sequence conflict" description="In Ref. 1; AAA33211." evidence="4" ref="1">
    <original>R</original>
    <variation>V</variation>
    <location>
        <position position="524"/>
    </location>
</feature>
<feature type="sequence conflict" description="In Ref. 1; AAA33211." evidence="4" ref="1">
    <original>S</original>
    <variation>A</variation>
    <location>
        <position position="533"/>
    </location>
</feature>
<feature type="sequence conflict" description="In Ref. 1; AAA33211." evidence="4" ref="1">
    <original>I</original>
    <variation>V</variation>
    <location>
        <position position="558"/>
    </location>
</feature>
<feature type="sequence conflict" description="In Ref. 1; AAA33211." evidence="4" ref="1">
    <original>N</original>
    <variation>S</variation>
    <location>
        <position position="565"/>
    </location>
</feature>
<feature type="sequence conflict" description="In Ref. 1; AAA33211." evidence="4" ref="1">
    <original>N</original>
    <variation>S</variation>
    <location>
        <position position="568"/>
    </location>
</feature>
<feature type="sequence conflict" description="In Ref. 1; AAA33211." evidence="4" ref="1">
    <original>RR</original>
    <variation>SS</variation>
    <location>
        <begin position="573"/>
        <end position="574"/>
    </location>
</feature>
<feature type="sequence conflict" description="In Ref. 1; AAA33211." evidence="4" ref="1">
    <original>Q</original>
    <variation>E</variation>
    <location>
        <position position="577"/>
    </location>
</feature>
<feature type="sequence conflict" description="In Ref. 1; AAA33211." evidence="4" ref="1">
    <original>EIK</original>
    <variation>TIN</variation>
    <location>
        <begin position="621"/>
        <end position="623"/>
    </location>
</feature>
<dbReference type="EC" id="2.4.1.1"/>
<dbReference type="EMBL" id="M77492">
    <property type="protein sequence ID" value="AAA33211.1"/>
    <property type="molecule type" value="Genomic_DNA"/>
</dbReference>
<dbReference type="EMBL" id="AAFI02000175">
    <property type="protein sequence ID" value="EAL61845.1"/>
    <property type="molecule type" value="Genomic_DNA"/>
</dbReference>
<dbReference type="PIR" id="A42318">
    <property type="entry name" value="A42318"/>
</dbReference>
<dbReference type="RefSeq" id="XP_635369.1">
    <property type="nucleotide sequence ID" value="XM_630277.1"/>
</dbReference>
<dbReference type="SMR" id="P34114"/>
<dbReference type="FunCoup" id="P34114">
    <property type="interactions" value="317"/>
</dbReference>
<dbReference type="STRING" id="44689.P34114"/>
<dbReference type="CAZy" id="GT35">
    <property type="family name" value="Glycosyltransferase Family 35"/>
</dbReference>
<dbReference type="PaxDb" id="44689-DDB0191397"/>
<dbReference type="EnsemblProtists" id="EAL61845">
    <property type="protein sequence ID" value="EAL61845"/>
    <property type="gene ID" value="DDB_G0291123"/>
</dbReference>
<dbReference type="GeneID" id="8628017"/>
<dbReference type="KEGG" id="ddi:DDB_G0291123"/>
<dbReference type="dictyBase" id="DDB_G0291123">
    <property type="gene designation" value="glpD"/>
</dbReference>
<dbReference type="VEuPathDB" id="AmoebaDB:DDB_G0291123"/>
<dbReference type="eggNOG" id="KOG2099">
    <property type="taxonomic scope" value="Eukaryota"/>
</dbReference>
<dbReference type="HOGENOM" id="CLU_010198_1_1_1"/>
<dbReference type="InParanoid" id="P34114"/>
<dbReference type="OMA" id="GIEPCRC"/>
<dbReference type="PhylomeDB" id="P34114"/>
<dbReference type="Reactome" id="R-DDI-6798695">
    <property type="pathway name" value="Neutrophil degranulation"/>
</dbReference>
<dbReference type="Reactome" id="R-DDI-70221">
    <property type="pathway name" value="Glycogen breakdown (glycogenolysis)"/>
</dbReference>
<dbReference type="PRO" id="PR:P34114"/>
<dbReference type="Proteomes" id="UP000002195">
    <property type="component" value="Chromosome 5"/>
</dbReference>
<dbReference type="GO" id="GO:0005737">
    <property type="term" value="C:cytoplasm"/>
    <property type="evidence" value="ECO:0000318"/>
    <property type="project" value="GO_Central"/>
</dbReference>
<dbReference type="GO" id="GO:0008184">
    <property type="term" value="F:glycogen phosphorylase activity"/>
    <property type="evidence" value="ECO:0000314"/>
    <property type="project" value="dictyBase"/>
</dbReference>
<dbReference type="GO" id="GO:0042802">
    <property type="term" value="F:identical protein binding"/>
    <property type="evidence" value="ECO:0000353"/>
    <property type="project" value="dictyBase"/>
</dbReference>
<dbReference type="GO" id="GO:0030170">
    <property type="term" value="F:pyridoxal phosphate binding"/>
    <property type="evidence" value="ECO:0000318"/>
    <property type="project" value="GO_Central"/>
</dbReference>
<dbReference type="GO" id="GO:0005980">
    <property type="term" value="P:glycogen catabolic process"/>
    <property type="evidence" value="ECO:0000314"/>
    <property type="project" value="dictyBase"/>
</dbReference>
<dbReference type="GO" id="GO:0060359">
    <property type="term" value="P:response to ammonium ion"/>
    <property type="evidence" value="ECO:0000314"/>
    <property type="project" value="dictyBase"/>
</dbReference>
<dbReference type="GO" id="GO:0051591">
    <property type="term" value="P:response to cAMP"/>
    <property type="evidence" value="ECO:0000314"/>
    <property type="project" value="dictyBase"/>
</dbReference>
<dbReference type="GO" id="GO:1903013">
    <property type="term" value="P:response to differentiation-inducing factor 1"/>
    <property type="evidence" value="ECO:0000314"/>
    <property type="project" value="dictyBase"/>
</dbReference>
<dbReference type="CDD" id="cd04300">
    <property type="entry name" value="GT35_Glycogen_Phosphorylase"/>
    <property type="match status" value="1"/>
</dbReference>
<dbReference type="FunFam" id="3.40.50.2000:FF:000002">
    <property type="entry name" value="Alpha-1,4 glucan phosphorylase"/>
    <property type="match status" value="1"/>
</dbReference>
<dbReference type="Gene3D" id="3.40.50.2000">
    <property type="entry name" value="Glycogen Phosphorylase B"/>
    <property type="match status" value="2"/>
</dbReference>
<dbReference type="InterPro" id="IPR011833">
    <property type="entry name" value="Glycg_phsphrylas"/>
</dbReference>
<dbReference type="InterPro" id="IPR000811">
    <property type="entry name" value="Glyco_trans_35"/>
</dbReference>
<dbReference type="InterPro" id="IPR035090">
    <property type="entry name" value="Pyridoxal_P_attach_site"/>
</dbReference>
<dbReference type="NCBIfam" id="TIGR02093">
    <property type="entry name" value="P_ylase"/>
    <property type="match status" value="1"/>
</dbReference>
<dbReference type="PANTHER" id="PTHR11468">
    <property type="entry name" value="GLYCOGEN PHOSPHORYLASE"/>
    <property type="match status" value="1"/>
</dbReference>
<dbReference type="PANTHER" id="PTHR11468:SF2">
    <property type="entry name" value="GLYCOGEN PHOSPHORYLASE 2"/>
    <property type="match status" value="1"/>
</dbReference>
<dbReference type="Pfam" id="PF00343">
    <property type="entry name" value="Phosphorylase"/>
    <property type="match status" value="1"/>
</dbReference>
<dbReference type="PIRSF" id="PIRSF000460">
    <property type="entry name" value="Pprylas_GlgP"/>
    <property type="match status" value="1"/>
</dbReference>
<dbReference type="SUPFAM" id="SSF53756">
    <property type="entry name" value="UDP-Glycosyltransferase/glycogen phosphorylase"/>
    <property type="match status" value="1"/>
</dbReference>
<dbReference type="PROSITE" id="PS00102">
    <property type="entry name" value="PHOSPHORYLASE"/>
    <property type="match status" value="1"/>
</dbReference>
<organism>
    <name type="scientific">Dictyostelium discoideum</name>
    <name type="common">Social amoeba</name>
    <dbReference type="NCBI Taxonomy" id="44689"/>
    <lineage>
        <taxon>Eukaryota</taxon>
        <taxon>Amoebozoa</taxon>
        <taxon>Evosea</taxon>
        <taxon>Eumycetozoa</taxon>
        <taxon>Dictyostelia</taxon>
        <taxon>Dictyosteliales</taxon>
        <taxon>Dictyosteliaceae</taxon>
        <taxon>Dictyostelium</taxon>
    </lineage>
</organism>
<sequence length="993" mass="113104">MEEKRSTNSPGFDKPKLNRSGSITSATSHPPRSNSNPKLVAKHQQQLYEESKNKRNQEQQNQQPQQQQQKQTSNQSEDPATQLSSLKFESDKEKEQALLWAFLASYLPEDKGSLQKEFVKHVEYTLAQTKSECTDFSSFQALSYCTRDRLIERWKDTKLFFKQKNVKQVNYMSLEFLLGRSLQNSLSALGLVGKYSDALMDLGFKLEDLYDEERDAGLGNGGLGRLAACFMDSLATCNFPGYGYGLRYKFGMFYQTLVDGEQVELPDYWLNYGSPWEIERLDVSYPINFYGKVSEVEDENGKKVMKWDQGEQMLAVAYDYPIPGFKTYNTVAIRLWSSKPSDEFNLDSFNRGDYLGAIEEKEKSENITNVLYPNDNTMQGKELRLKQQYLFVSATIQDIISQFKETGKPFSEFHNFHAIQLNDTHPTLGIPELMRILIDEEKKSWDEAWDITTKTFSYTNHTVLPEALEKWSVSMVENVLPRHIMIIYEINERFLKLVDQKWPGDMSKRRALSIIDESDGKFIRMAFLAIVGSHTINGVAYLHSELVKHDVFPLFYEIWPNKFQNKTNGVTPRRWIQQSNPQLAELITRSLNSDRWLVNLDIIKDLVHLADNSSFQKEWMEIKRNNKIRLAKYIEKRCDIQVNVDVLFDVQVKRFHEYKRQLLNVLSVINRYLDIKEGKKVAPRVVIFGGKAAPGYYMAKLIIKLINSVADVVNNDPKVGDLLKVVFIPNYCVSNAEIIIPASDISQHISTAGTEASGTSNMKFSMNGGLIIGTLDGANIEIRDAIGHENMYIFGARSEEVNKVKKIIHDGKFTPDTRWARVLTAIKEDTFGPHEQFQDIINSVSGGNDHYILSYDFGSYLDIQNSIDQDFKDRAKWAKKSIMASVCCGKFSSDRTIKEYAQQIWGIEEWKRPGPVPVSNEEARSLLVPPPSGSPNDINAISIERLSPLTFVKQTSASPLSVISGGDKTNNTLKPKQTTKGFNIGGQPGNPTN</sequence>
<protein>
    <recommendedName>
        <fullName>Glycogen phosphorylase 2</fullName>
        <shortName>GP2</shortName>
        <ecNumber>2.4.1.1</ecNumber>
    </recommendedName>
</protein>
<name>PHS2_DICDI</name>
<accession>P34114</accession>
<accession>Q54F21</accession>
<evidence type="ECO:0000250" key="1"/>
<evidence type="ECO:0000256" key="2">
    <source>
        <dbReference type="SAM" id="MobiDB-lite"/>
    </source>
</evidence>
<evidence type="ECO:0000269" key="3">
    <source>
    </source>
</evidence>
<evidence type="ECO:0000305" key="4"/>
<proteinExistence type="evidence at protein level"/>
<keyword id="KW-0021">Allosteric enzyme</keyword>
<keyword id="KW-0119">Carbohydrate metabolism</keyword>
<keyword id="KW-0903">Direct protein sequencing</keyword>
<keyword id="KW-0321">Glycogen metabolism</keyword>
<keyword id="KW-0328">Glycosyltransferase</keyword>
<keyword id="KW-0663">Pyridoxal phosphate</keyword>
<keyword id="KW-1185">Reference proteome</keyword>
<keyword id="KW-0808">Transferase</keyword>
<gene>
    <name type="primary">glpD</name>
    <name type="ORF">DDB_G0291123</name>
</gene>
<reference key="1">
    <citation type="journal article" date="1992" name="J. Biol. Chem.">
        <title>Cloning, structural analysis, and expression of the glycogen phosphorylase-2 gene in Dictyostelium.</title>
        <authorList>
            <person name="Rutherford C.L."/>
            <person name="Peery R.B."/>
            <person name="Sucic J.F."/>
            <person name="Yin Y."/>
            <person name="Rogers P.V."/>
            <person name="Luo S."/>
            <person name="Selmin O."/>
        </authorList>
    </citation>
    <scope>NUCLEOTIDE SEQUENCE [GENOMIC DNA]</scope>
    <scope>PROTEIN SEQUENCE</scope>
    <scope>SUBUNIT</scope>
    <scope>PROTEOLYTIC PROCESSING</scope>
    <scope>DEVELOPMENTAL STAGE</scope>
    <source>
        <strain>AX3</strain>
    </source>
</reference>
<reference key="2">
    <citation type="journal article" date="2005" name="Nature">
        <title>The genome of the social amoeba Dictyostelium discoideum.</title>
        <authorList>
            <person name="Eichinger L."/>
            <person name="Pachebat J.A."/>
            <person name="Gloeckner G."/>
            <person name="Rajandream M.A."/>
            <person name="Sucgang R."/>
            <person name="Berriman M."/>
            <person name="Song J."/>
            <person name="Olsen R."/>
            <person name="Szafranski K."/>
            <person name="Xu Q."/>
            <person name="Tunggal B."/>
            <person name="Kummerfeld S."/>
            <person name="Madera M."/>
            <person name="Konfortov B.A."/>
            <person name="Rivero F."/>
            <person name="Bankier A.T."/>
            <person name="Lehmann R."/>
            <person name="Hamlin N."/>
            <person name="Davies R."/>
            <person name="Gaudet P."/>
            <person name="Fey P."/>
            <person name="Pilcher K."/>
            <person name="Chen G."/>
            <person name="Saunders D."/>
            <person name="Sodergren E.J."/>
            <person name="Davis P."/>
            <person name="Kerhornou A."/>
            <person name="Nie X."/>
            <person name="Hall N."/>
            <person name="Anjard C."/>
            <person name="Hemphill L."/>
            <person name="Bason N."/>
            <person name="Farbrother P."/>
            <person name="Desany B."/>
            <person name="Just E."/>
            <person name="Morio T."/>
            <person name="Rost R."/>
            <person name="Churcher C.M."/>
            <person name="Cooper J."/>
            <person name="Haydock S."/>
            <person name="van Driessche N."/>
            <person name="Cronin A."/>
            <person name="Goodhead I."/>
            <person name="Muzny D.M."/>
            <person name="Mourier T."/>
            <person name="Pain A."/>
            <person name="Lu M."/>
            <person name="Harper D."/>
            <person name="Lindsay R."/>
            <person name="Hauser H."/>
            <person name="James K.D."/>
            <person name="Quiles M."/>
            <person name="Madan Babu M."/>
            <person name="Saito T."/>
            <person name="Buchrieser C."/>
            <person name="Wardroper A."/>
            <person name="Felder M."/>
            <person name="Thangavelu M."/>
            <person name="Johnson D."/>
            <person name="Knights A."/>
            <person name="Loulseged H."/>
            <person name="Mungall K.L."/>
            <person name="Oliver K."/>
            <person name="Price C."/>
            <person name="Quail M.A."/>
            <person name="Urushihara H."/>
            <person name="Hernandez J."/>
            <person name="Rabbinowitsch E."/>
            <person name="Steffen D."/>
            <person name="Sanders M."/>
            <person name="Ma J."/>
            <person name="Kohara Y."/>
            <person name="Sharp S."/>
            <person name="Simmonds M.N."/>
            <person name="Spiegler S."/>
            <person name="Tivey A."/>
            <person name="Sugano S."/>
            <person name="White B."/>
            <person name="Walker D."/>
            <person name="Woodward J.R."/>
            <person name="Winckler T."/>
            <person name="Tanaka Y."/>
            <person name="Shaulsky G."/>
            <person name="Schleicher M."/>
            <person name="Weinstock G.M."/>
            <person name="Rosenthal A."/>
            <person name="Cox E.C."/>
            <person name="Chisholm R.L."/>
            <person name="Gibbs R.A."/>
            <person name="Loomis W.F."/>
            <person name="Platzer M."/>
            <person name="Kay R.R."/>
            <person name="Williams J.G."/>
            <person name="Dear P.H."/>
            <person name="Noegel A.A."/>
            <person name="Barrell B.G."/>
            <person name="Kuspa A."/>
        </authorList>
    </citation>
    <scope>NUCLEOTIDE SEQUENCE [LARGE SCALE GENOMIC DNA]</scope>
    <source>
        <strain>AX4</strain>
    </source>
</reference>
<comment type="function">
    <text>Phosphorylase is an important allosteric enzyme in carbohydrate metabolism. Enzymes from different sources differ in their regulatory mechanisms and in their natural substrates. However, all known phosphorylases share catalytic and structural properties.</text>
</comment>
<comment type="catalytic activity">
    <reaction>
        <text>[(1-&gt;4)-alpha-D-glucosyl](n) + phosphate = [(1-&gt;4)-alpha-D-glucosyl](n-1) + alpha-D-glucose 1-phosphate</text>
        <dbReference type="Rhea" id="RHEA:41732"/>
        <dbReference type="Rhea" id="RHEA-COMP:9584"/>
        <dbReference type="Rhea" id="RHEA-COMP:9586"/>
        <dbReference type="ChEBI" id="CHEBI:15444"/>
        <dbReference type="ChEBI" id="CHEBI:43474"/>
        <dbReference type="ChEBI" id="CHEBI:58601"/>
        <dbReference type="EC" id="2.4.1.1"/>
    </reaction>
</comment>
<comment type="cofactor">
    <cofactor>
        <name>pyridoxal 5'-phosphate</name>
        <dbReference type="ChEBI" id="CHEBI:597326"/>
    </cofactor>
</comment>
<comment type="subunit">
    <text evidence="3">Homodimer.</text>
</comment>
<comment type="developmental stage">
    <text evidence="3">Appears during cell differentiation; absent in amoebae and early stages of development, reaches a maximum level of expression at the slug stage and then decreases.</text>
</comment>
<comment type="PTM">
    <text>The N-terminus is blocked.</text>
</comment>
<comment type="PTM">
    <text evidence="3">Enzyme activity requires processing of the 113 kDa peptide to an enzymatically active 106 kDa form of the protein. Processing would occur near the middle of the Gln-rich repetitive element.</text>
</comment>
<comment type="miscellaneous">
    <text>In D.discoideum glycogen phosphorylase exists as 2 developmentally regulated forms, GP1 and GP2, which are the products of separate genes.</text>
</comment>
<comment type="similarity">
    <text evidence="4">Belongs to the glycogen phosphorylase family.</text>
</comment>